<dbReference type="EMBL" id="U73528">
    <property type="protein sequence ID" value="AAB58902.1"/>
    <property type="molecule type" value="mRNA"/>
</dbReference>
<dbReference type="EMBL" id="Z97338">
    <property type="protein sequence ID" value="CAB10320.1"/>
    <property type="status" value="ALT_SEQ"/>
    <property type="molecule type" value="Genomic_DNA"/>
</dbReference>
<dbReference type="EMBL" id="AL161541">
    <property type="protein sequence ID" value="CAB78583.1"/>
    <property type="status" value="ALT_SEQ"/>
    <property type="molecule type" value="Genomic_DNA"/>
</dbReference>
<dbReference type="EMBL" id="CP002687">
    <property type="protein sequence ID" value="AEE83598.1"/>
    <property type="molecule type" value="Genomic_DNA"/>
</dbReference>
<dbReference type="EMBL" id="CP002687">
    <property type="protein sequence ID" value="AEE83599.1"/>
    <property type="molecule type" value="Genomic_DNA"/>
</dbReference>
<dbReference type="EMBL" id="CP002687">
    <property type="protein sequence ID" value="ANM66523.1"/>
    <property type="molecule type" value="Genomic_DNA"/>
</dbReference>
<dbReference type="EMBL" id="CP002687">
    <property type="protein sequence ID" value="ANM66524.1"/>
    <property type="molecule type" value="Genomic_DNA"/>
</dbReference>
<dbReference type="EMBL" id="AY093761">
    <property type="protein sequence ID" value="AAM10385.1"/>
    <property type="molecule type" value="mRNA"/>
</dbReference>
<dbReference type="EMBL" id="BT020581">
    <property type="protein sequence ID" value="AAW80854.1"/>
    <property type="molecule type" value="mRNA"/>
</dbReference>
<dbReference type="PIR" id="F71418">
    <property type="entry name" value="F71418"/>
</dbReference>
<dbReference type="SMR" id="Q8RW96"/>
<dbReference type="BioGRID" id="12508">
    <property type="interactions" value="5"/>
</dbReference>
<dbReference type="FunCoup" id="Q8RW96">
    <property type="interactions" value="4000"/>
</dbReference>
<dbReference type="STRING" id="3702.Q8RW96"/>
<dbReference type="iPTMnet" id="Q8RW96"/>
<dbReference type="PaxDb" id="3702-AT4G15415.2"/>
<dbReference type="ProteomicsDB" id="245169"/>
<dbReference type="EnsemblPlants" id="AT4G15415.1">
    <property type="protein sequence ID" value="AT4G15415.1"/>
    <property type="gene ID" value="AT4G15415"/>
</dbReference>
<dbReference type="EnsemblPlants" id="AT4G15415.2">
    <property type="protein sequence ID" value="AT4G15415.2"/>
    <property type="gene ID" value="AT4G15415"/>
</dbReference>
<dbReference type="EnsemblPlants" id="AT4G15415.4">
    <property type="protein sequence ID" value="AT4G15415.4"/>
    <property type="gene ID" value="AT4G15415"/>
</dbReference>
<dbReference type="EnsemblPlants" id="AT4G15415.5">
    <property type="protein sequence ID" value="AT4G15415.5"/>
    <property type="gene ID" value="AT4G15415"/>
</dbReference>
<dbReference type="Gramene" id="AT4G15415.1">
    <property type="protein sequence ID" value="AT4G15415.1"/>
    <property type="gene ID" value="AT4G15415"/>
</dbReference>
<dbReference type="Gramene" id="AT4G15415.2">
    <property type="protein sequence ID" value="AT4G15415.2"/>
    <property type="gene ID" value="AT4G15415"/>
</dbReference>
<dbReference type="Gramene" id="AT4G15415.4">
    <property type="protein sequence ID" value="AT4G15415.4"/>
    <property type="gene ID" value="AT4G15415"/>
</dbReference>
<dbReference type="Gramene" id="AT4G15415.5">
    <property type="protein sequence ID" value="AT4G15415.5"/>
    <property type="gene ID" value="AT4G15415"/>
</dbReference>
<dbReference type="KEGG" id="ath:AT4G15415"/>
<dbReference type="Araport" id="AT4G15415"/>
<dbReference type="TAIR" id="AT4G15415">
    <property type="gene designation" value="ATB' GAMMA"/>
</dbReference>
<dbReference type="eggNOG" id="KOG2085">
    <property type="taxonomic scope" value="Eukaryota"/>
</dbReference>
<dbReference type="HOGENOM" id="CLU_012437_4_1_1"/>
<dbReference type="InParanoid" id="Q8RW96"/>
<dbReference type="OMA" id="QESKMLE"/>
<dbReference type="PhylomeDB" id="Q8RW96"/>
<dbReference type="PRO" id="PR:Q8RW96"/>
<dbReference type="Proteomes" id="UP000006548">
    <property type="component" value="Chromosome 4"/>
</dbReference>
<dbReference type="ExpressionAtlas" id="Q8RW96">
    <property type="expression patterns" value="baseline and differential"/>
</dbReference>
<dbReference type="GO" id="GO:0005737">
    <property type="term" value="C:cytoplasm"/>
    <property type="evidence" value="ECO:0000314"/>
    <property type="project" value="UniProtKB"/>
</dbReference>
<dbReference type="GO" id="GO:0005829">
    <property type="term" value="C:cytosol"/>
    <property type="evidence" value="ECO:0000314"/>
    <property type="project" value="TAIR"/>
</dbReference>
<dbReference type="GO" id="GO:0005634">
    <property type="term" value="C:nucleus"/>
    <property type="evidence" value="ECO:0000314"/>
    <property type="project" value="UniProtKB"/>
</dbReference>
<dbReference type="GO" id="GO:0000159">
    <property type="term" value="C:protein phosphatase type 2A complex"/>
    <property type="evidence" value="ECO:0007669"/>
    <property type="project" value="InterPro"/>
</dbReference>
<dbReference type="GO" id="GO:0008266">
    <property type="term" value="F:poly(U) RNA binding"/>
    <property type="evidence" value="ECO:0000314"/>
    <property type="project" value="TAIR"/>
</dbReference>
<dbReference type="GO" id="GO:0019888">
    <property type="term" value="F:protein phosphatase regulator activity"/>
    <property type="evidence" value="ECO:0007669"/>
    <property type="project" value="InterPro"/>
</dbReference>
<dbReference type="GO" id="GO:0009742">
    <property type="term" value="P:brassinosteroid mediated signaling pathway"/>
    <property type="evidence" value="ECO:0007669"/>
    <property type="project" value="UniProtKB-KW"/>
</dbReference>
<dbReference type="GO" id="GO:0006952">
    <property type="term" value="P:defense response"/>
    <property type="evidence" value="ECO:0007669"/>
    <property type="project" value="UniProtKB-KW"/>
</dbReference>
<dbReference type="GO" id="GO:0009908">
    <property type="term" value="P:flower development"/>
    <property type="evidence" value="ECO:0007669"/>
    <property type="project" value="UniProtKB-KW"/>
</dbReference>
<dbReference type="GO" id="GO:0009759">
    <property type="term" value="P:indole glucosinolate biosynthetic process"/>
    <property type="evidence" value="ECO:0000315"/>
    <property type="project" value="TAIR"/>
</dbReference>
<dbReference type="GO" id="GO:0006555">
    <property type="term" value="P:methionine metabolic process"/>
    <property type="evidence" value="ECO:0000315"/>
    <property type="project" value="TAIR"/>
</dbReference>
<dbReference type="GO" id="GO:0031348">
    <property type="term" value="P:negative regulation of defense response"/>
    <property type="evidence" value="ECO:0000315"/>
    <property type="project" value="TAIR"/>
</dbReference>
<dbReference type="GO" id="GO:1900056">
    <property type="term" value="P:negative regulation of leaf senescence"/>
    <property type="evidence" value="ECO:0000315"/>
    <property type="project" value="TAIR"/>
</dbReference>
<dbReference type="GO" id="GO:2000377">
    <property type="term" value="P:regulation of reactive oxygen species metabolic process"/>
    <property type="evidence" value="ECO:0000315"/>
    <property type="project" value="UniProtKB"/>
</dbReference>
<dbReference type="GO" id="GO:2000031">
    <property type="term" value="P:regulation of salicylic acid mediated signaling pathway"/>
    <property type="evidence" value="ECO:0000270"/>
    <property type="project" value="TAIR"/>
</dbReference>
<dbReference type="GO" id="GO:0033353">
    <property type="term" value="P:S-adenosylmethionine cycle"/>
    <property type="evidence" value="ECO:0000315"/>
    <property type="project" value="TAIR"/>
</dbReference>
<dbReference type="GO" id="GO:0010090">
    <property type="term" value="P:trichome morphogenesis"/>
    <property type="evidence" value="ECO:0000316"/>
    <property type="project" value="TAIR"/>
</dbReference>
<dbReference type="FunFam" id="1.25.10.10:FF:000041">
    <property type="entry name" value="Serine/threonine protein phosphatase 2A regulatory subunit"/>
    <property type="match status" value="1"/>
</dbReference>
<dbReference type="Gene3D" id="1.25.10.10">
    <property type="entry name" value="Leucine-rich Repeat Variant"/>
    <property type="match status" value="1"/>
</dbReference>
<dbReference type="InterPro" id="IPR011989">
    <property type="entry name" value="ARM-like"/>
</dbReference>
<dbReference type="InterPro" id="IPR016024">
    <property type="entry name" value="ARM-type_fold"/>
</dbReference>
<dbReference type="InterPro" id="IPR002554">
    <property type="entry name" value="PP2A_B56"/>
</dbReference>
<dbReference type="PANTHER" id="PTHR10257">
    <property type="entry name" value="SERINE/THREONINE PROTEIN PHOSPHATASE 2A PP2A REGULATORY SUBUNIT B"/>
    <property type="match status" value="1"/>
</dbReference>
<dbReference type="PANTHER" id="PTHR10257:SF115">
    <property type="entry name" value="SERINE_THREONINE PROTEIN PHOSPHATASE 2A 59 KDA REGULATORY SUBUNIT B' GAMMA ISOFORM"/>
    <property type="match status" value="1"/>
</dbReference>
<dbReference type="Pfam" id="PF01603">
    <property type="entry name" value="B56"/>
    <property type="match status" value="1"/>
</dbReference>
<dbReference type="PIRSF" id="PIRSF028043">
    <property type="entry name" value="PP2A_B56"/>
    <property type="match status" value="1"/>
</dbReference>
<dbReference type="SUPFAM" id="SSF48371">
    <property type="entry name" value="ARM repeat"/>
    <property type="match status" value="1"/>
</dbReference>
<protein>
    <recommendedName>
        <fullName>Serine/threonine protein phosphatase 2A 59 kDa regulatory subunit B' gamma isoform</fullName>
        <shortName>AtB' gamma</shortName>
        <shortName>PP2A, B' subunit, gamma isoform</shortName>
    </recommendedName>
</protein>
<feature type="chain" id="PRO_0000071462" description="Serine/threonine protein phosphatase 2A 59 kDa regulatory subunit B' gamma isoform">
    <location>
        <begin position="1"/>
        <end position="522"/>
    </location>
</feature>
<feature type="region of interest" description="Disordered" evidence="2">
    <location>
        <begin position="1"/>
        <end position="74"/>
    </location>
</feature>
<feature type="compositionally biased region" description="Low complexity" evidence="2">
    <location>
        <begin position="35"/>
        <end position="58"/>
    </location>
</feature>
<feature type="compositionally biased region" description="Polar residues" evidence="2">
    <location>
        <begin position="63"/>
        <end position="74"/>
    </location>
</feature>
<feature type="sequence conflict" description="In Ref. 5; AAM10385." evidence="12" ref="5">
    <original>F</original>
    <variation>L</variation>
    <location>
        <position position="384"/>
    </location>
</feature>
<evidence type="ECO:0000250" key="1">
    <source>
        <dbReference type="UniProtKB" id="Q13362"/>
    </source>
</evidence>
<evidence type="ECO:0000256" key="2">
    <source>
        <dbReference type="SAM" id="MobiDB-lite"/>
    </source>
</evidence>
<evidence type="ECO:0000269" key="3">
    <source>
    </source>
</evidence>
<evidence type="ECO:0000269" key="4">
    <source>
    </source>
</evidence>
<evidence type="ECO:0000269" key="5">
    <source>
    </source>
</evidence>
<evidence type="ECO:0000269" key="6">
    <source>
    </source>
</evidence>
<evidence type="ECO:0000269" key="7">
    <source>
    </source>
</evidence>
<evidence type="ECO:0000269" key="8">
    <source>
    </source>
</evidence>
<evidence type="ECO:0000269" key="9">
    <source>
    </source>
</evidence>
<evidence type="ECO:0000269" key="10">
    <source>
    </source>
</evidence>
<evidence type="ECO:0000269" key="11">
    <source>
    </source>
</evidence>
<evidence type="ECO:0000305" key="12"/>
<evidence type="ECO:0000305" key="13">
    <source>
    </source>
</evidence>
<sequence length="522" mass="59157">MIKQIFGKLPRKPSKSSHNDSNPNGEGGVNSYYIPNSGISSISKPSSKSSASNSNGANGTVIAPSSTSSNRTNQVNGVYEALPSFRDVPTSEKPNLFIKKLSMCCVVFDFNDPSKNLREKEIKRQTLLELVDYIATVSTKLSDAAMQEIAKVAVVNLFRTFPSANHESKILETLDVDDEEPALEPAWPHLQVVYELLLRFVASPMTDAKLAKRYIDHSFVLKLLDLFDSEDQREREYLKTILHRIYGKFMVHRPFIRKAINNIFYRFIFETEKHNGIAELLEILGSIINGFALPLKEEHKLFLIRALIPLHRPKCASAYHQQLSYCIVQFVEKDFKLADTVIRGLLKYWPVTNSSKEVMFLGELEEVLEATQAAEFQRCMVPLFRQIARCLNSSHFQVAERALFLWNNDHIRNLITQNHKVIMPIVFPAMERNTRGHWNQAVQSLTLNVRKVMAETDQILFDECLAKFQEDEANETEVVAKREATWKLLEELAASKSVSNEAVLVPRFSSSVTLATGKTSGS</sequence>
<proteinExistence type="evidence at protein level"/>
<gene>
    <name type="primary">B'GAMMA</name>
    <name type="ordered locus">At4g15415</name>
    <name type="ORF">dl3750w</name>
    <name type="ORF">FCAALL.118</name>
</gene>
<keyword id="KW-1070">Brassinosteroid signaling pathway</keyword>
<keyword id="KW-0963">Cytoplasm</keyword>
<keyword id="KW-0287">Flowering</keyword>
<keyword id="KW-0539">Nucleus</keyword>
<keyword id="KW-0611">Plant defense</keyword>
<keyword id="KW-1185">Reference proteome</keyword>
<keyword id="KW-0346">Stress response</keyword>
<name>2A5G_ARATH</name>
<reference key="1">
    <citation type="journal article" date="1997" name="Eur. J. Biochem.">
        <title>Differential expression of three Arabidopsis genes encoding the B' regulatory subunit of protein phosphatase 2A.</title>
        <authorList>
            <person name="Latorre K.A."/>
            <person name="Harris D.M."/>
            <person name="Rundle S.J."/>
        </authorList>
    </citation>
    <scope>NUCLEOTIDE SEQUENCE [MRNA]</scope>
    <scope>TISSUE SPECIFICITY</scope>
    <scope>INDUCTION</scope>
</reference>
<reference key="2">
    <citation type="journal article" date="1998" name="Nature">
        <title>Analysis of 1.9 Mb of contiguous sequence from chromosome 4 of Arabidopsis thaliana.</title>
        <authorList>
            <person name="Bevan M."/>
            <person name="Bancroft I."/>
            <person name="Bent E."/>
            <person name="Love K."/>
            <person name="Goodman H.M."/>
            <person name="Dean C."/>
            <person name="Bergkamp R."/>
            <person name="Dirkse W."/>
            <person name="van Staveren M."/>
            <person name="Stiekema W."/>
            <person name="Drost L."/>
            <person name="Ridley P."/>
            <person name="Hudson S.-A."/>
            <person name="Patel K."/>
            <person name="Murphy G."/>
            <person name="Piffanelli P."/>
            <person name="Wedler H."/>
            <person name="Wedler E."/>
            <person name="Wambutt R."/>
            <person name="Weitzenegger T."/>
            <person name="Pohl T."/>
            <person name="Terryn N."/>
            <person name="Gielen J."/>
            <person name="Villarroel R."/>
            <person name="De Clercq R."/>
            <person name="van Montagu M."/>
            <person name="Lecharny A."/>
            <person name="Aubourg S."/>
            <person name="Gy I."/>
            <person name="Kreis M."/>
            <person name="Lao N."/>
            <person name="Kavanagh T."/>
            <person name="Hempel S."/>
            <person name="Kotter P."/>
            <person name="Entian K.-D."/>
            <person name="Rieger M."/>
            <person name="Schaefer M."/>
            <person name="Funk B."/>
            <person name="Mueller-Auer S."/>
            <person name="Silvey M."/>
            <person name="James R."/>
            <person name="Monfort A."/>
            <person name="Pons A."/>
            <person name="Puigdomenech P."/>
            <person name="Douka A."/>
            <person name="Voukelatou E."/>
            <person name="Milioni D."/>
            <person name="Hatzopoulos P."/>
            <person name="Piravandi E."/>
            <person name="Obermaier B."/>
            <person name="Hilbert H."/>
            <person name="Duesterhoeft A."/>
            <person name="Moores T."/>
            <person name="Jones J.D.G."/>
            <person name="Eneva T."/>
            <person name="Palme K."/>
            <person name="Benes V."/>
            <person name="Rechmann S."/>
            <person name="Ansorge W."/>
            <person name="Cooke R."/>
            <person name="Berger C."/>
            <person name="Delseny M."/>
            <person name="Voet M."/>
            <person name="Volckaert G."/>
            <person name="Mewes H.-W."/>
            <person name="Klosterman S."/>
            <person name="Schueller C."/>
            <person name="Chalwatzis N."/>
        </authorList>
    </citation>
    <scope>NUCLEOTIDE SEQUENCE [LARGE SCALE GENOMIC DNA]</scope>
    <source>
        <strain>cv. Columbia</strain>
    </source>
</reference>
<reference key="3">
    <citation type="journal article" date="1999" name="Nature">
        <title>Sequence and analysis of chromosome 4 of the plant Arabidopsis thaliana.</title>
        <authorList>
            <person name="Mayer K.F.X."/>
            <person name="Schueller C."/>
            <person name="Wambutt R."/>
            <person name="Murphy G."/>
            <person name="Volckaert G."/>
            <person name="Pohl T."/>
            <person name="Duesterhoeft A."/>
            <person name="Stiekema W."/>
            <person name="Entian K.-D."/>
            <person name="Terryn N."/>
            <person name="Harris B."/>
            <person name="Ansorge W."/>
            <person name="Brandt P."/>
            <person name="Grivell L.A."/>
            <person name="Rieger M."/>
            <person name="Weichselgartner M."/>
            <person name="de Simone V."/>
            <person name="Obermaier B."/>
            <person name="Mache R."/>
            <person name="Mueller M."/>
            <person name="Kreis M."/>
            <person name="Delseny M."/>
            <person name="Puigdomenech P."/>
            <person name="Watson M."/>
            <person name="Schmidtheini T."/>
            <person name="Reichert B."/>
            <person name="Portetelle D."/>
            <person name="Perez-Alonso M."/>
            <person name="Boutry M."/>
            <person name="Bancroft I."/>
            <person name="Vos P."/>
            <person name="Hoheisel J."/>
            <person name="Zimmermann W."/>
            <person name="Wedler H."/>
            <person name="Ridley P."/>
            <person name="Langham S.-A."/>
            <person name="McCullagh B."/>
            <person name="Bilham L."/>
            <person name="Robben J."/>
            <person name="van der Schueren J."/>
            <person name="Grymonprez B."/>
            <person name="Chuang Y.-J."/>
            <person name="Vandenbussche F."/>
            <person name="Braeken M."/>
            <person name="Weltjens I."/>
            <person name="Voet M."/>
            <person name="Bastiaens I."/>
            <person name="Aert R."/>
            <person name="Defoor E."/>
            <person name="Weitzenegger T."/>
            <person name="Bothe G."/>
            <person name="Ramsperger U."/>
            <person name="Hilbert H."/>
            <person name="Braun M."/>
            <person name="Holzer E."/>
            <person name="Brandt A."/>
            <person name="Peters S."/>
            <person name="van Staveren M."/>
            <person name="Dirkse W."/>
            <person name="Mooijman P."/>
            <person name="Klein Lankhorst R."/>
            <person name="Rose M."/>
            <person name="Hauf J."/>
            <person name="Koetter P."/>
            <person name="Berneiser S."/>
            <person name="Hempel S."/>
            <person name="Feldpausch M."/>
            <person name="Lamberth S."/>
            <person name="Van den Daele H."/>
            <person name="De Keyser A."/>
            <person name="Buysshaert C."/>
            <person name="Gielen J."/>
            <person name="Villarroel R."/>
            <person name="De Clercq R."/>
            <person name="van Montagu M."/>
            <person name="Rogers J."/>
            <person name="Cronin A."/>
            <person name="Quail M.A."/>
            <person name="Bray-Allen S."/>
            <person name="Clark L."/>
            <person name="Doggett J."/>
            <person name="Hall S."/>
            <person name="Kay M."/>
            <person name="Lennard N."/>
            <person name="McLay K."/>
            <person name="Mayes R."/>
            <person name="Pettett A."/>
            <person name="Rajandream M.A."/>
            <person name="Lyne M."/>
            <person name="Benes V."/>
            <person name="Rechmann S."/>
            <person name="Borkova D."/>
            <person name="Bloecker H."/>
            <person name="Scharfe M."/>
            <person name="Grimm M."/>
            <person name="Loehnert T.-H."/>
            <person name="Dose S."/>
            <person name="de Haan M."/>
            <person name="Maarse A.C."/>
            <person name="Schaefer M."/>
            <person name="Mueller-Auer S."/>
            <person name="Gabel C."/>
            <person name="Fuchs M."/>
            <person name="Fartmann B."/>
            <person name="Granderath K."/>
            <person name="Dauner D."/>
            <person name="Herzl A."/>
            <person name="Neumann S."/>
            <person name="Argiriou A."/>
            <person name="Vitale D."/>
            <person name="Liguori R."/>
            <person name="Piravandi E."/>
            <person name="Massenet O."/>
            <person name="Quigley F."/>
            <person name="Clabauld G."/>
            <person name="Muendlein A."/>
            <person name="Felber R."/>
            <person name="Schnabl S."/>
            <person name="Hiller R."/>
            <person name="Schmidt W."/>
            <person name="Lecharny A."/>
            <person name="Aubourg S."/>
            <person name="Chefdor F."/>
            <person name="Cooke R."/>
            <person name="Berger C."/>
            <person name="Monfort A."/>
            <person name="Casacuberta E."/>
            <person name="Gibbons T."/>
            <person name="Weber N."/>
            <person name="Vandenbol M."/>
            <person name="Bargues M."/>
            <person name="Terol J."/>
            <person name="Torres A."/>
            <person name="Perez-Perez A."/>
            <person name="Purnelle B."/>
            <person name="Bent E."/>
            <person name="Johnson S."/>
            <person name="Tacon D."/>
            <person name="Jesse T."/>
            <person name="Heijnen L."/>
            <person name="Schwarz S."/>
            <person name="Scholler P."/>
            <person name="Heber S."/>
            <person name="Francs P."/>
            <person name="Bielke C."/>
            <person name="Frishman D."/>
            <person name="Haase D."/>
            <person name="Lemcke K."/>
            <person name="Mewes H.-W."/>
            <person name="Stocker S."/>
            <person name="Zaccaria P."/>
            <person name="Bevan M."/>
            <person name="Wilson R.K."/>
            <person name="de la Bastide M."/>
            <person name="Habermann K."/>
            <person name="Parnell L."/>
            <person name="Dedhia N."/>
            <person name="Gnoj L."/>
            <person name="Schutz K."/>
            <person name="Huang E."/>
            <person name="Spiegel L."/>
            <person name="Sekhon M."/>
            <person name="Murray J."/>
            <person name="Sheet P."/>
            <person name="Cordes M."/>
            <person name="Abu-Threideh J."/>
            <person name="Stoneking T."/>
            <person name="Kalicki J."/>
            <person name="Graves T."/>
            <person name="Harmon G."/>
            <person name="Edwards J."/>
            <person name="Latreille P."/>
            <person name="Courtney L."/>
            <person name="Cloud J."/>
            <person name="Abbott A."/>
            <person name="Scott K."/>
            <person name="Johnson D."/>
            <person name="Minx P."/>
            <person name="Bentley D."/>
            <person name="Fulton B."/>
            <person name="Miller N."/>
            <person name="Greco T."/>
            <person name="Kemp K."/>
            <person name="Kramer J."/>
            <person name="Fulton L."/>
            <person name="Mardis E."/>
            <person name="Dante M."/>
            <person name="Pepin K."/>
            <person name="Hillier L.W."/>
            <person name="Nelson J."/>
            <person name="Spieth J."/>
            <person name="Ryan E."/>
            <person name="Andrews S."/>
            <person name="Geisel C."/>
            <person name="Layman D."/>
            <person name="Du H."/>
            <person name="Ali J."/>
            <person name="Berghoff A."/>
            <person name="Jones K."/>
            <person name="Drone K."/>
            <person name="Cotton M."/>
            <person name="Joshu C."/>
            <person name="Antonoiu B."/>
            <person name="Zidanic M."/>
            <person name="Strong C."/>
            <person name="Sun H."/>
            <person name="Lamar B."/>
            <person name="Yordan C."/>
            <person name="Ma P."/>
            <person name="Zhong J."/>
            <person name="Preston R."/>
            <person name="Vil D."/>
            <person name="Shekher M."/>
            <person name="Matero A."/>
            <person name="Shah R."/>
            <person name="Swaby I.K."/>
            <person name="O'Shaughnessy A."/>
            <person name="Rodriguez M."/>
            <person name="Hoffman J."/>
            <person name="Till S."/>
            <person name="Granat S."/>
            <person name="Shohdy N."/>
            <person name="Hasegawa A."/>
            <person name="Hameed A."/>
            <person name="Lodhi M."/>
            <person name="Johnson A."/>
            <person name="Chen E."/>
            <person name="Marra M.A."/>
            <person name="Martienssen R."/>
            <person name="McCombie W.R."/>
        </authorList>
    </citation>
    <scope>NUCLEOTIDE SEQUENCE [LARGE SCALE GENOMIC DNA]</scope>
    <source>
        <strain>cv. Columbia</strain>
    </source>
</reference>
<reference key="4">
    <citation type="journal article" date="2017" name="Plant J.">
        <title>Araport11: a complete reannotation of the Arabidopsis thaliana reference genome.</title>
        <authorList>
            <person name="Cheng C.Y."/>
            <person name="Krishnakumar V."/>
            <person name="Chan A.P."/>
            <person name="Thibaud-Nissen F."/>
            <person name="Schobel S."/>
            <person name="Town C.D."/>
        </authorList>
    </citation>
    <scope>GENOME REANNOTATION</scope>
    <source>
        <strain>cv. Columbia</strain>
    </source>
</reference>
<reference key="5">
    <citation type="journal article" date="2003" name="Science">
        <title>Empirical analysis of transcriptional activity in the Arabidopsis genome.</title>
        <authorList>
            <person name="Yamada K."/>
            <person name="Lim J."/>
            <person name="Dale J.M."/>
            <person name="Chen H."/>
            <person name="Shinn P."/>
            <person name="Palm C.J."/>
            <person name="Southwick A.M."/>
            <person name="Wu H.C."/>
            <person name="Kim C.J."/>
            <person name="Nguyen M."/>
            <person name="Pham P.K."/>
            <person name="Cheuk R.F."/>
            <person name="Karlin-Newmann G."/>
            <person name="Liu S.X."/>
            <person name="Lam B."/>
            <person name="Sakano H."/>
            <person name="Wu T."/>
            <person name="Yu G."/>
            <person name="Miranda M."/>
            <person name="Quach H.L."/>
            <person name="Tripp M."/>
            <person name="Chang C.H."/>
            <person name="Lee J.M."/>
            <person name="Toriumi M.J."/>
            <person name="Chan M.M."/>
            <person name="Tang C.C."/>
            <person name="Onodera C.S."/>
            <person name="Deng J.M."/>
            <person name="Akiyama K."/>
            <person name="Ansari Y."/>
            <person name="Arakawa T."/>
            <person name="Banh J."/>
            <person name="Banno F."/>
            <person name="Bowser L."/>
            <person name="Brooks S.Y."/>
            <person name="Carninci P."/>
            <person name="Chao Q."/>
            <person name="Choy N."/>
            <person name="Enju A."/>
            <person name="Goldsmith A.D."/>
            <person name="Gurjal M."/>
            <person name="Hansen N.F."/>
            <person name="Hayashizaki Y."/>
            <person name="Johnson-Hopson C."/>
            <person name="Hsuan V.W."/>
            <person name="Iida K."/>
            <person name="Karnes M."/>
            <person name="Khan S."/>
            <person name="Koesema E."/>
            <person name="Ishida J."/>
            <person name="Jiang P.X."/>
            <person name="Jones T."/>
            <person name="Kawai J."/>
            <person name="Kamiya A."/>
            <person name="Meyers C."/>
            <person name="Nakajima M."/>
            <person name="Narusaka M."/>
            <person name="Seki M."/>
            <person name="Sakurai T."/>
            <person name="Satou M."/>
            <person name="Tamse R."/>
            <person name="Vaysberg M."/>
            <person name="Wallender E.K."/>
            <person name="Wong C."/>
            <person name="Yamamura Y."/>
            <person name="Yuan S."/>
            <person name="Shinozaki K."/>
            <person name="Davis R.W."/>
            <person name="Theologis A."/>
            <person name="Ecker J.R."/>
        </authorList>
    </citation>
    <scope>NUCLEOTIDE SEQUENCE [LARGE SCALE MRNA]</scope>
    <source>
        <strain>cv. Columbia</strain>
    </source>
</reference>
<reference key="6">
    <citation type="submission" date="2005-02" db="EMBL/GenBank/DDBJ databases">
        <title>Arabidopsis ORF clones.</title>
        <authorList>
            <person name="Cheuk R.F."/>
            <person name="Chen H."/>
            <person name="Kim C.J."/>
            <person name="Shinn P."/>
            <person name="Ecker J.R."/>
        </authorList>
    </citation>
    <scope>NUCLEOTIDE SEQUENCE [LARGE SCALE MRNA]</scope>
    <source>
        <strain>cv. Columbia</strain>
    </source>
</reference>
<reference key="7">
    <citation type="journal article" date="1999" name="Eur. J. Biochem.">
        <title>Molecular characterization of the B' regulatory subunit gene family of Arabidopsis protein phosphatase 2A.</title>
        <authorList>
            <person name="Haynes J.G."/>
            <person name="Hartung A.J."/>
            <person name="Hendershot J.D. III"/>
            <person name="Passingham R.S."/>
            <person name="Rundle S.J."/>
        </authorList>
    </citation>
    <scope>INTERACTION WITH PP2AA1</scope>
</reference>
<reference key="8">
    <citation type="journal article" date="2002" name="Plant Physiol.">
        <title>Molecular characterization and evolution of the protein phosphatase 2A B' regulatory subunit family in plants.</title>
        <authorList>
            <person name="Terol J."/>
            <person name="Bargues M."/>
            <person name="Carrasco P."/>
            <person name="Perez-Alonso M."/>
            <person name="Paricio N."/>
        </authorList>
    </citation>
    <scope>NOMENCLATURE</scope>
</reference>
<reference key="9">
    <citation type="journal article" date="2009" name="Planta">
        <title>Diversity in subcellular targeting of the PP2A B'eta subfamily members.</title>
        <authorList>
            <person name="Matre P."/>
            <person name="Meyer C."/>
            <person name="Lillo C."/>
        </authorList>
    </citation>
    <scope>SUBCELLULAR LOCATION</scope>
</reference>
<reference key="10">
    <citation type="journal article" date="2011" name="Plant Physiol.">
        <title>Regulatory subunit B'gamma of protein phosphatase 2A prevents unnecessary defense reactions under low light in Arabidopsis.</title>
        <authorList>
            <person name="Trotta A."/>
            <person name="Wrzaczek M."/>
            <person name="Scharte J."/>
            <person name="Tikkanen M."/>
            <person name="Konert G."/>
            <person name="Rahikainen M."/>
            <person name="Holmstroem M."/>
            <person name="Hiltunen H.M."/>
            <person name="Rips S."/>
            <person name="Sipari N."/>
            <person name="Mulo P."/>
            <person name="Weis E."/>
            <person name="von Schaewen A."/>
            <person name="Aro E.M."/>
            <person name="Kangasjaervi S."/>
        </authorList>
    </citation>
    <scope>FUNCTION</scope>
    <scope>SUBCELLULAR LOCATION</scope>
    <scope>DISRUPTION PHENOTYPE</scope>
</reference>
<reference key="11">
    <citation type="journal article" date="2011" name="Plant Signal. Behav.">
        <title>Knock-down of protein phosphatase 2A subunit B'gamma promotes phosphorylation of CALRETICULIN 1 in Arabidopsis thaliana.</title>
        <authorList>
            <person name="Trotta A."/>
            <person name="Konert G."/>
            <person name="Rahikainen M."/>
            <person name="Aro E.M."/>
            <person name="Kangasjaervi S."/>
        </authorList>
    </citation>
    <scope>FUNCTION</scope>
    <scope>DISRUPTION PHENOTYPE</scope>
</reference>
<reference key="12">
    <citation type="journal article" date="2013" name="PLoS ONE">
        <title>Antagonistic regulation of flowering time through distinct regulatory subunits of protein phosphatase 2A.</title>
        <authorList>
            <person name="Heidari B."/>
            <person name="Nemie-Feyissa D."/>
            <person name="Kangasjarvi S."/>
            <person name="Lillo C."/>
        </authorList>
    </citation>
    <scope>FUNCTION</scope>
    <scope>DISRUPTION PHENOTYPE</scope>
</reference>
<reference key="13">
    <citation type="journal article" date="2015" name="New Phytol.">
        <title>Protein phosphatase 2A (PP2A) regulatory subunit B'gamma interacts with cytoplasmic ACONITASE 3 and modulates the abundance of AOX1A and AOX1D in Arabidopsis thaliana.</title>
        <authorList>
            <person name="Konert G."/>
            <person name="Trotta A."/>
            <person name="Kouvonen P."/>
            <person name="Rahikainen M."/>
            <person name="Durian G."/>
            <person name="Blokhina O."/>
            <person name="Fagerstedt K."/>
            <person name="Muth D."/>
            <person name="Corthals G.L."/>
            <person name="Kangasjaervi S."/>
        </authorList>
    </citation>
    <scope>FUNCTION</scope>
    <scope>DISRUPTION PHENOTYPE</scope>
    <scope>INTERACTION WITH ACO3</scope>
    <scope>SUBCELLULAR LOCATION</scope>
    <source>
        <strain>cv. Columbia</strain>
    </source>
</reference>
<reference key="14">
    <citation type="journal article" date="2015" name="Plant Cell Environ.">
        <title>Subunits B'gamma and B'zeta of protein phosphatase 2A regulate photo-oxidative stress responses and growth in Arabidopsis thaliana.</title>
        <authorList>
            <person name="Konert G."/>
            <person name="Rahikainen M."/>
            <person name="Trotta A."/>
            <person name="Durian G."/>
            <person name="Salojaervi J."/>
            <person name="Khorobrykh S."/>
            <person name="Tyystjaervi E."/>
            <person name="Kangasjaervi S."/>
        </authorList>
    </citation>
    <scope>FUNCTION</scope>
    <scope>TISSUE SPECIFICITY</scope>
</reference>
<reference key="15">
    <citation type="journal article" date="2016" name="Mol. Plant">
        <title>The brassinosteroid-activated BRI1 receptor kinase is switched off by dephosphorylation mediated by cytoplasm-localized PP2A B' subunits.</title>
        <authorList>
            <person name="Wang R."/>
            <person name="Liu M."/>
            <person name="Yuan M."/>
            <person name="Oses-Prieto J.A."/>
            <person name="Cai X."/>
            <person name="Sun Y."/>
            <person name="Burlingame A.L."/>
            <person name="Wang Z.Y."/>
            <person name="Tang W."/>
        </authorList>
    </citation>
    <scope>FUNCTION</scope>
    <scope>INTERACTION WITH BRI1</scope>
    <scope>SUBCELLULAR LOCATION</scope>
</reference>
<reference key="16">
    <citation type="journal article" date="2017" name="Plant J.">
        <title>PP2A-B'gamma modulates foliar trans-methylation capacity and the formation of 4-methoxy-indol-3-yl-methyl glucosinolate in Arabidopsis leaves.</title>
        <authorList>
            <person name="Rahikainen M."/>
            <person name="Trotta A."/>
            <person name="Alegre S."/>
            <person name="Pascual J."/>
            <person name="Vuorinen K."/>
            <person name="Overmyer K."/>
            <person name="Moffatt B."/>
            <person name="Ravanel S."/>
            <person name="Glawischnig E."/>
            <person name="Kangasjaervi S."/>
        </authorList>
    </citation>
    <scope>FUNCTION</scope>
    <scope>INTERACTION WITH IGMT1 AND IGMT4</scope>
</reference>
<organism>
    <name type="scientific">Arabidopsis thaliana</name>
    <name type="common">Mouse-ear cress</name>
    <dbReference type="NCBI Taxonomy" id="3702"/>
    <lineage>
        <taxon>Eukaryota</taxon>
        <taxon>Viridiplantae</taxon>
        <taxon>Streptophyta</taxon>
        <taxon>Embryophyta</taxon>
        <taxon>Tracheophyta</taxon>
        <taxon>Spermatophyta</taxon>
        <taxon>Magnoliopsida</taxon>
        <taxon>eudicotyledons</taxon>
        <taxon>Gunneridae</taxon>
        <taxon>Pentapetalae</taxon>
        <taxon>rosids</taxon>
        <taxon>malvids</taxon>
        <taxon>Brassicales</taxon>
        <taxon>Brassicaceae</taxon>
        <taxon>Camelineae</taxon>
        <taxon>Arabidopsis</taxon>
    </lineage>
</organism>
<accession>Q8RW96</accession>
<accession>O04377</accession>
<accession>O23394</accession>
<comment type="function">
    <text evidence="1 4 5 6 7 8 9 10">The B regulatory subunit may modulate substrate selectivity and catalytic activity, and may also direct the localization of the catalytic enzyme to a particular subcellular compartment (By similarity). Required for the formation of the PP2A holoenzyme that negatively regulates brassinosteroid signaling by dephosphorylating and inactivating BRI1 in the cytoplasm (PubMed:26517938). Seems to be functionally connected with CPR5 and may mediate the negative regulation of defense reactions and senescence under low irradiances. May contribute to the epigenetic regulation of defense gene expression (PubMed:21571669). Involved in the control of methoxylation of indole glucosinolates and formation of 4-methoxy- indol-3-yl-methyl glucosinolate in leaves, through direct interaction with indole glucosinolate methyltransferases (PubMed:27598402). Involved in growth regulation and stress signaling (PubMed:26012558). Involved in the regulation of reactive oxygen species (ROS) signaling and maintenance of cellular ROS homeostasis (PubMed:25307043, PubMed:26012558). Required to control the level of ACO3 phosphorylation in the cytoplasm. Regulates hydrogen peroxide metabolism by controlling the abundance of AOX1A and AXO3/AOX1D in leaf mitochondria (PubMed:25307043). May mediate dephosphorylation of CRT1 and promote the degradation of unfolded proteins in endoplasmic reticulum (ER) (PubMed:22041935). Involved in the regulation of flowering time by repressing FLC, the main flowering repressor gene (PubMed:23976921).</text>
</comment>
<comment type="subunit">
    <text evidence="7 9 10 13">PP2A consists of a common heteromeric enzyme, composed of a catalytic subunit (subunits C), a constant regulatory subunit (subunit A), and a variety of regulatory subunits such as subunits B (the R2/B/PR55/B55, R3/B''/PR72/PR130/PR59 and R5/B'/B56 families) (Probable). Interacts with BRI1 (PubMed:26517938). Interacts with IGMT1 and IGMT4 (PubMed:27598402). Interacts with ACO3 in the cytosol (PubMed:25307043).</text>
</comment>
<comment type="subcellular location">
    <subcellularLocation>
        <location evidence="3 4 7 9">Cytoplasm</location>
        <location evidence="3 4 7 9">Cytosol</location>
    </subcellularLocation>
    <subcellularLocation>
        <location evidence="3">Nucleus</location>
    </subcellularLocation>
</comment>
<comment type="tissue specificity">
    <text evidence="8 11">Expressed ubiquitously at low levels (PubMed:9128737). Expressed in roots, emerging lateral roots, cotyledons, leaves, floral stalks and flowers (PubMed:26012558).</text>
</comment>
<comment type="induction">
    <text evidence="11">By heat shock.</text>
</comment>
<comment type="disruption phenotype">
    <text evidence="4 5 6 7">Wrinkled leaves, stunted growth, delayed flowering and formation of age-dependent yellowing lesions (PubMed:21571669, PubMed:22041935, PubMed:23976921). Conditional phenotype with premature yellowing and constitutive reactive oxygen species (ROS) production in distinct peripheral areas of mature leaves when grown under moderate light intensity and low humidity. May partially evade the accumulation of H(2)O(2) via alternative oxidases (AOX) activity. Increased levels of AOX1A and AOX1D in leaf mitochondria. Increased level of ACO3 phosphorylation.</text>
</comment>
<comment type="similarity">
    <text evidence="12">Belongs to the phosphatase 2A regulatory subunit B56 family.</text>
</comment>
<comment type="sequence caution" evidence="12">
    <conflict type="erroneous gene model prediction">
        <sequence resource="EMBL-CDS" id="CAB10320"/>
    </conflict>
    <text>The predicted gene At4g15410 has been split into 2 genes: At4g15410 and At4g15415.</text>
</comment>
<comment type="sequence caution" evidence="12">
    <conflict type="erroneous gene model prediction">
        <sequence resource="EMBL-CDS" id="CAB78583"/>
    </conflict>
    <text>The predicted gene At4g15410 has been split into 2 genes: At4g15410 and At4g15415.</text>
</comment>